<proteinExistence type="inferred from homology"/>
<evidence type="ECO:0000255" key="1">
    <source>
        <dbReference type="HAMAP-Rule" id="MF_01346"/>
    </source>
</evidence>
<comment type="function">
    <text evidence="1">Produces ATP from ADP in the presence of a proton gradient across the membrane. The alpha chain is a regulatory subunit.</text>
</comment>
<comment type="catalytic activity">
    <reaction evidence="1">
        <text>ATP + H2O + 4 H(+)(in) = ADP + phosphate + 5 H(+)(out)</text>
        <dbReference type="Rhea" id="RHEA:57720"/>
        <dbReference type="ChEBI" id="CHEBI:15377"/>
        <dbReference type="ChEBI" id="CHEBI:15378"/>
        <dbReference type="ChEBI" id="CHEBI:30616"/>
        <dbReference type="ChEBI" id="CHEBI:43474"/>
        <dbReference type="ChEBI" id="CHEBI:456216"/>
        <dbReference type="EC" id="7.1.2.2"/>
    </reaction>
</comment>
<comment type="subunit">
    <text evidence="1">F-type ATPases have 2 components, CF(1) - the catalytic core - and CF(0) - the membrane proton channel. CF(1) has five subunits: alpha(3), beta(3), gamma(1), delta(1), epsilon(1). CF(0) has three main subunits: a(1), b(2) and c(9-12). The alpha and beta chains form an alternating ring which encloses part of the gamma chain. CF(1) is attached to CF(0) by a central stalk formed by the gamma and epsilon chains, while a peripheral stalk is formed by the delta and b chains.</text>
</comment>
<comment type="subcellular location">
    <subcellularLocation>
        <location evidence="1">Cell inner membrane</location>
        <topology evidence="1">Peripheral membrane protein</topology>
    </subcellularLocation>
</comment>
<comment type="similarity">
    <text evidence="1">Belongs to the ATPase alpha/beta chains family.</text>
</comment>
<feature type="chain" id="PRO_0000302655" description="ATP synthase subunit alpha">
    <location>
        <begin position="1"/>
        <end position="503"/>
    </location>
</feature>
<feature type="binding site" evidence="1">
    <location>
        <begin position="170"/>
        <end position="177"/>
    </location>
    <ligand>
        <name>ATP</name>
        <dbReference type="ChEBI" id="CHEBI:30616"/>
    </ligand>
</feature>
<feature type="site" description="Required for activity" evidence="1">
    <location>
        <position position="363"/>
    </location>
</feature>
<gene>
    <name evidence="1" type="primary">atpA</name>
    <name type="ordered locus">Hac_0580</name>
</gene>
<sequence>MSQLKLEEISSVIEEKIKNFELDCDMAEVGKVVSYADGVAKIYGLNGVMSYEVLEFETGDKGVAANLEEDSVGVIVFGFGNNIKEGTSVKRTKSLMKVPVGDAVVGRVLNALGEPIDGKGEIETNEFSLIEQKAPGIMDRKSVHEPLQTGIKAIDALVPIGRGQRELIIGDKQTGKTTVAIDTIINQKGQNVICIYVAIGQKESTVAQVVRKLEEYGAMEYSVVVNASASDSAAMQYLAPYAGVAMGEYFRDHARHALIIYDDLSKHAVAYREISLILRRPPGREAFPGDVFYIHSRLLERAAKVCDEKGAGSLTALPIVETQAGDVSAYIPTNIISITDGQIFLETDLFYSGIRPAINVGLSVSRVGGAAQIKATKQVSGTLRLDLAQYRELQAFTQFASDLDEASKKQLERGQRMVEVLKQAPYSPLPIEKQVVIIYAGAKGFLDSVSVKKVVDFEERLYPFLEAKYPQVLEEIHIKKALDKDLEAMLKKALEEFKLTYSE</sequence>
<name>ATPA_HELAH</name>
<dbReference type="EC" id="7.1.2.2" evidence="1"/>
<dbReference type="EMBL" id="AM260522">
    <property type="protein sequence ID" value="CAJ99396.1"/>
    <property type="molecule type" value="Genomic_DNA"/>
</dbReference>
<dbReference type="RefSeq" id="WP_011577510.1">
    <property type="nucleotide sequence ID" value="NC_008229.1"/>
</dbReference>
<dbReference type="SMR" id="Q17Y80"/>
<dbReference type="STRING" id="382638.Hac_0580"/>
<dbReference type="GeneID" id="31758057"/>
<dbReference type="KEGG" id="hac:Hac_0580"/>
<dbReference type="eggNOG" id="COG0056">
    <property type="taxonomic scope" value="Bacteria"/>
</dbReference>
<dbReference type="HOGENOM" id="CLU_010091_2_1_7"/>
<dbReference type="OrthoDB" id="9803053at2"/>
<dbReference type="BioCyc" id="HACI382638:HAC_RS02565-MONOMER"/>
<dbReference type="Proteomes" id="UP000000775">
    <property type="component" value="Chromosome"/>
</dbReference>
<dbReference type="GO" id="GO:0005886">
    <property type="term" value="C:plasma membrane"/>
    <property type="evidence" value="ECO:0007669"/>
    <property type="project" value="UniProtKB-SubCell"/>
</dbReference>
<dbReference type="GO" id="GO:0045259">
    <property type="term" value="C:proton-transporting ATP synthase complex"/>
    <property type="evidence" value="ECO:0007669"/>
    <property type="project" value="UniProtKB-KW"/>
</dbReference>
<dbReference type="GO" id="GO:0043531">
    <property type="term" value="F:ADP binding"/>
    <property type="evidence" value="ECO:0007669"/>
    <property type="project" value="TreeGrafter"/>
</dbReference>
<dbReference type="GO" id="GO:0005524">
    <property type="term" value="F:ATP binding"/>
    <property type="evidence" value="ECO:0007669"/>
    <property type="project" value="UniProtKB-UniRule"/>
</dbReference>
<dbReference type="GO" id="GO:0046933">
    <property type="term" value="F:proton-transporting ATP synthase activity, rotational mechanism"/>
    <property type="evidence" value="ECO:0007669"/>
    <property type="project" value="UniProtKB-UniRule"/>
</dbReference>
<dbReference type="CDD" id="cd18113">
    <property type="entry name" value="ATP-synt_F1_alpha_C"/>
    <property type="match status" value="1"/>
</dbReference>
<dbReference type="CDD" id="cd18116">
    <property type="entry name" value="ATP-synt_F1_alpha_N"/>
    <property type="match status" value="1"/>
</dbReference>
<dbReference type="CDD" id="cd01132">
    <property type="entry name" value="F1-ATPase_alpha_CD"/>
    <property type="match status" value="1"/>
</dbReference>
<dbReference type="FunFam" id="1.20.150.20:FF:000001">
    <property type="entry name" value="ATP synthase subunit alpha"/>
    <property type="match status" value="1"/>
</dbReference>
<dbReference type="FunFam" id="3.40.50.300:FF:000002">
    <property type="entry name" value="ATP synthase subunit alpha"/>
    <property type="match status" value="1"/>
</dbReference>
<dbReference type="Gene3D" id="2.40.30.20">
    <property type="match status" value="1"/>
</dbReference>
<dbReference type="Gene3D" id="1.20.150.20">
    <property type="entry name" value="ATP synthase alpha/beta chain, C-terminal domain"/>
    <property type="match status" value="1"/>
</dbReference>
<dbReference type="Gene3D" id="3.40.50.300">
    <property type="entry name" value="P-loop containing nucleotide triphosphate hydrolases"/>
    <property type="match status" value="1"/>
</dbReference>
<dbReference type="HAMAP" id="MF_01346">
    <property type="entry name" value="ATP_synth_alpha_bact"/>
    <property type="match status" value="1"/>
</dbReference>
<dbReference type="InterPro" id="IPR023366">
    <property type="entry name" value="ATP_synth_asu-like_sf"/>
</dbReference>
<dbReference type="InterPro" id="IPR000793">
    <property type="entry name" value="ATP_synth_asu_C"/>
</dbReference>
<dbReference type="InterPro" id="IPR038376">
    <property type="entry name" value="ATP_synth_asu_C_sf"/>
</dbReference>
<dbReference type="InterPro" id="IPR033732">
    <property type="entry name" value="ATP_synth_F1_a_nt-bd_dom"/>
</dbReference>
<dbReference type="InterPro" id="IPR005294">
    <property type="entry name" value="ATP_synth_F1_asu"/>
</dbReference>
<dbReference type="InterPro" id="IPR020003">
    <property type="entry name" value="ATPase_a/bsu_AS"/>
</dbReference>
<dbReference type="InterPro" id="IPR004100">
    <property type="entry name" value="ATPase_F1/V1/A1_a/bsu_N"/>
</dbReference>
<dbReference type="InterPro" id="IPR036121">
    <property type="entry name" value="ATPase_F1/V1/A1_a/bsu_N_sf"/>
</dbReference>
<dbReference type="InterPro" id="IPR000194">
    <property type="entry name" value="ATPase_F1/V1/A1_a/bsu_nucl-bd"/>
</dbReference>
<dbReference type="InterPro" id="IPR027417">
    <property type="entry name" value="P-loop_NTPase"/>
</dbReference>
<dbReference type="NCBIfam" id="TIGR00962">
    <property type="entry name" value="atpA"/>
    <property type="match status" value="1"/>
</dbReference>
<dbReference type="NCBIfam" id="NF009884">
    <property type="entry name" value="PRK13343.1"/>
    <property type="match status" value="1"/>
</dbReference>
<dbReference type="PANTHER" id="PTHR48082">
    <property type="entry name" value="ATP SYNTHASE SUBUNIT ALPHA, MITOCHONDRIAL"/>
    <property type="match status" value="1"/>
</dbReference>
<dbReference type="PANTHER" id="PTHR48082:SF2">
    <property type="entry name" value="ATP SYNTHASE SUBUNIT ALPHA, MITOCHONDRIAL"/>
    <property type="match status" value="1"/>
</dbReference>
<dbReference type="Pfam" id="PF00006">
    <property type="entry name" value="ATP-synt_ab"/>
    <property type="match status" value="1"/>
</dbReference>
<dbReference type="Pfam" id="PF00306">
    <property type="entry name" value="ATP-synt_ab_C"/>
    <property type="match status" value="1"/>
</dbReference>
<dbReference type="Pfam" id="PF02874">
    <property type="entry name" value="ATP-synt_ab_N"/>
    <property type="match status" value="1"/>
</dbReference>
<dbReference type="PIRSF" id="PIRSF039088">
    <property type="entry name" value="F_ATPase_subunit_alpha"/>
    <property type="match status" value="1"/>
</dbReference>
<dbReference type="SUPFAM" id="SSF47917">
    <property type="entry name" value="C-terminal domain of alpha and beta subunits of F1 ATP synthase"/>
    <property type="match status" value="1"/>
</dbReference>
<dbReference type="SUPFAM" id="SSF50615">
    <property type="entry name" value="N-terminal domain of alpha and beta subunits of F1 ATP synthase"/>
    <property type="match status" value="1"/>
</dbReference>
<dbReference type="SUPFAM" id="SSF52540">
    <property type="entry name" value="P-loop containing nucleoside triphosphate hydrolases"/>
    <property type="match status" value="1"/>
</dbReference>
<dbReference type="PROSITE" id="PS00152">
    <property type="entry name" value="ATPASE_ALPHA_BETA"/>
    <property type="match status" value="1"/>
</dbReference>
<organism>
    <name type="scientific">Helicobacter acinonychis (strain Sheeba)</name>
    <dbReference type="NCBI Taxonomy" id="382638"/>
    <lineage>
        <taxon>Bacteria</taxon>
        <taxon>Pseudomonadati</taxon>
        <taxon>Campylobacterota</taxon>
        <taxon>Epsilonproteobacteria</taxon>
        <taxon>Campylobacterales</taxon>
        <taxon>Helicobacteraceae</taxon>
        <taxon>Helicobacter</taxon>
    </lineage>
</organism>
<keyword id="KW-0066">ATP synthesis</keyword>
<keyword id="KW-0067">ATP-binding</keyword>
<keyword id="KW-0997">Cell inner membrane</keyword>
<keyword id="KW-1003">Cell membrane</keyword>
<keyword id="KW-0139">CF(1)</keyword>
<keyword id="KW-0375">Hydrogen ion transport</keyword>
<keyword id="KW-0406">Ion transport</keyword>
<keyword id="KW-0472">Membrane</keyword>
<keyword id="KW-0547">Nucleotide-binding</keyword>
<keyword id="KW-1278">Translocase</keyword>
<keyword id="KW-0813">Transport</keyword>
<protein>
    <recommendedName>
        <fullName evidence="1">ATP synthase subunit alpha</fullName>
        <ecNumber evidence="1">7.1.2.2</ecNumber>
    </recommendedName>
    <alternativeName>
        <fullName evidence="1">ATP synthase F1 sector subunit alpha</fullName>
    </alternativeName>
    <alternativeName>
        <fullName evidence="1">F-ATPase subunit alpha</fullName>
    </alternativeName>
</protein>
<accession>Q17Y80</accession>
<reference key="1">
    <citation type="journal article" date="2006" name="PLoS Genet.">
        <title>Who ate whom? Adaptive Helicobacter genomic changes that accompanied a host jump from early humans to large felines.</title>
        <authorList>
            <person name="Eppinger M."/>
            <person name="Baar C."/>
            <person name="Linz B."/>
            <person name="Raddatz G."/>
            <person name="Lanz C."/>
            <person name="Keller H."/>
            <person name="Morelli G."/>
            <person name="Gressmann H."/>
            <person name="Achtman M."/>
            <person name="Schuster S.C."/>
        </authorList>
    </citation>
    <scope>NUCLEOTIDE SEQUENCE [LARGE SCALE GENOMIC DNA]</scope>
    <source>
        <strain>Sheeba</strain>
    </source>
</reference>